<proteinExistence type="inferred from homology"/>
<sequence>MLNSAMSVVILAAGKGTRMYSDIPKVLHTLAGKPMVQHVIDAATKLGAAQVHLVYGHGGELLKQTLKDDKLNWVLQAEQLGTGHAMQQAAPFFSDDEDILMLYGDVPLISVETLQRLRDAKPQGGIGLLTVKLDDPSGYGRITRENGKVTGIVEHKDATDEQRQIQEINTGILIANGADLKRWLSKLTNNNAQGEYYITDIIALAYQEGREIAAVHPARISETDGVNNRLQLSRLERIYQAEQAEKLLLSGVMLRDPARFDLRGTLHCGMDVEIDANVIIEGYVTLGHRVKIGAGCIIKNSVIGDDCEISPYSVVEDAHLEAACTIGPFARLRPGAELLAGAHVGNFVEMKKARLGKGSKAGHLTYLGDAEIGDNVNIGAGTITCNYDGANKFKTVIDDDVFVGSDTQLVAPVTVGKGATIAAGTTVTRNVADNELVLSRVPQVHKQGWQRPVKKK</sequence>
<name>GLMU_SALPA</name>
<feature type="chain" id="PRO_0000233836" description="Bifunctional protein GlmU">
    <location>
        <begin position="1"/>
        <end position="456"/>
    </location>
</feature>
<feature type="region of interest" description="Pyrophosphorylase" evidence="1">
    <location>
        <begin position="1"/>
        <end position="229"/>
    </location>
</feature>
<feature type="region of interest" description="Linker" evidence="1">
    <location>
        <begin position="230"/>
        <end position="250"/>
    </location>
</feature>
<feature type="region of interest" description="N-acetyltransferase" evidence="1">
    <location>
        <begin position="251"/>
        <end position="456"/>
    </location>
</feature>
<feature type="active site" description="Proton acceptor" evidence="1">
    <location>
        <position position="363"/>
    </location>
</feature>
<feature type="binding site" evidence="1">
    <location>
        <begin position="11"/>
        <end position="14"/>
    </location>
    <ligand>
        <name>UDP-N-acetyl-alpha-D-glucosamine</name>
        <dbReference type="ChEBI" id="CHEBI:57705"/>
    </ligand>
</feature>
<feature type="binding site" evidence="1">
    <location>
        <position position="25"/>
    </location>
    <ligand>
        <name>UDP-N-acetyl-alpha-D-glucosamine</name>
        <dbReference type="ChEBI" id="CHEBI:57705"/>
    </ligand>
</feature>
<feature type="binding site" evidence="1">
    <location>
        <position position="76"/>
    </location>
    <ligand>
        <name>UDP-N-acetyl-alpha-D-glucosamine</name>
        <dbReference type="ChEBI" id="CHEBI:57705"/>
    </ligand>
</feature>
<feature type="binding site" evidence="1">
    <location>
        <begin position="81"/>
        <end position="82"/>
    </location>
    <ligand>
        <name>UDP-N-acetyl-alpha-D-glucosamine</name>
        <dbReference type="ChEBI" id="CHEBI:57705"/>
    </ligand>
</feature>
<feature type="binding site" evidence="1">
    <location>
        <begin position="103"/>
        <end position="105"/>
    </location>
    <ligand>
        <name>UDP-N-acetyl-alpha-D-glucosamine</name>
        <dbReference type="ChEBI" id="CHEBI:57705"/>
    </ligand>
</feature>
<feature type="binding site" evidence="1">
    <location>
        <position position="105"/>
    </location>
    <ligand>
        <name>Mg(2+)</name>
        <dbReference type="ChEBI" id="CHEBI:18420"/>
    </ligand>
</feature>
<feature type="binding site" evidence="1">
    <location>
        <position position="140"/>
    </location>
    <ligand>
        <name>UDP-N-acetyl-alpha-D-glucosamine</name>
        <dbReference type="ChEBI" id="CHEBI:57705"/>
    </ligand>
</feature>
<feature type="binding site" evidence="1">
    <location>
        <position position="154"/>
    </location>
    <ligand>
        <name>UDP-N-acetyl-alpha-D-glucosamine</name>
        <dbReference type="ChEBI" id="CHEBI:57705"/>
    </ligand>
</feature>
<feature type="binding site" evidence="1">
    <location>
        <position position="169"/>
    </location>
    <ligand>
        <name>UDP-N-acetyl-alpha-D-glucosamine</name>
        <dbReference type="ChEBI" id="CHEBI:57705"/>
    </ligand>
</feature>
<feature type="binding site" evidence="1">
    <location>
        <position position="227"/>
    </location>
    <ligand>
        <name>Mg(2+)</name>
        <dbReference type="ChEBI" id="CHEBI:18420"/>
    </ligand>
</feature>
<feature type="binding site" evidence="1">
    <location>
        <position position="227"/>
    </location>
    <ligand>
        <name>UDP-N-acetyl-alpha-D-glucosamine</name>
        <dbReference type="ChEBI" id="CHEBI:57705"/>
    </ligand>
</feature>
<feature type="binding site" evidence="1">
    <location>
        <position position="333"/>
    </location>
    <ligand>
        <name>UDP-N-acetyl-alpha-D-glucosamine</name>
        <dbReference type="ChEBI" id="CHEBI:57705"/>
    </ligand>
</feature>
<feature type="binding site" evidence="1">
    <location>
        <position position="351"/>
    </location>
    <ligand>
        <name>UDP-N-acetyl-alpha-D-glucosamine</name>
        <dbReference type="ChEBI" id="CHEBI:57705"/>
    </ligand>
</feature>
<feature type="binding site" evidence="1">
    <location>
        <position position="366"/>
    </location>
    <ligand>
        <name>UDP-N-acetyl-alpha-D-glucosamine</name>
        <dbReference type="ChEBI" id="CHEBI:57705"/>
    </ligand>
</feature>
<feature type="binding site" evidence="1">
    <location>
        <position position="377"/>
    </location>
    <ligand>
        <name>UDP-N-acetyl-alpha-D-glucosamine</name>
        <dbReference type="ChEBI" id="CHEBI:57705"/>
    </ligand>
</feature>
<feature type="binding site" evidence="1">
    <location>
        <position position="380"/>
    </location>
    <ligand>
        <name>acetyl-CoA</name>
        <dbReference type="ChEBI" id="CHEBI:57288"/>
    </ligand>
</feature>
<feature type="binding site" evidence="1">
    <location>
        <begin position="386"/>
        <end position="387"/>
    </location>
    <ligand>
        <name>acetyl-CoA</name>
        <dbReference type="ChEBI" id="CHEBI:57288"/>
    </ligand>
</feature>
<feature type="binding site" evidence="1">
    <location>
        <position position="405"/>
    </location>
    <ligand>
        <name>acetyl-CoA</name>
        <dbReference type="ChEBI" id="CHEBI:57288"/>
    </ligand>
</feature>
<feature type="binding site" evidence="1">
    <location>
        <position position="423"/>
    </location>
    <ligand>
        <name>acetyl-CoA</name>
        <dbReference type="ChEBI" id="CHEBI:57288"/>
    </ligand>
</feature>
<feature type="binding site" evidence="1">
    <location>
        <position position="440"/>
    </location>
    <ligand>
        <name>acetyl-CoA</name>
        <dbReference type="ChEBI" id="CHEBI:57288"/>
    </ligand>
</feature>
<keyword id="KW-0012">Acyltransferase</keyword>
<keyword id="KW-0133">Cell shape</keyword>
<keyword id="KW-0961">Cell wall biogenesis/degradation</keyword>
<keyword id="KW-0963">Cytoplasm</keyword>
<keyword id="KW-0460">Magnesium</keyword>
<keyword id="KW-0479">Metal-binding</keyword>
<keyword id="KW-0511">Multifunctional enzyme</keyword>
<keyword id="KW-0548">Nucleotidyltransferase</keyword>
<keyword id="KW-0573">Peptidoglycan synthesis</keyword>
<keyword id="KW-0677">Repeat</keyword>
<keyword id="KW-0808">Transferase</keyword>
<accession>Q5PKV8</accession>
<reference key="1">
    <citation type="journal article" date="2004" name="Nat. Genet.">
        <title>Comparison of genome degradation in Paratyphi A and Typhi, human-restricted serovars of Salmonella enterica that cause typhoid.</title>
        <authorList>
            <person name="McClelland M."/>
            <person name="Sanderson K.E."/>
            <person name="Clifton S.W."/>
            <person name="Latreille P."/>
            <person name="Porwollik S."/>
            <person name="Sabo A."/>
            <person name="Meyer R."/>
            <person name="Bieri T."/>
            <person name="Ozersky P."/>
            <person name="McLellan M."/>
            <person name="Harkins C.R."/>
            <person name="Wang C."/>
            <person name="Nguyen C."/>
            <person name="Berghoff A."/>
            <person name="Elliott G."/>
            <person name="Kohlberg S."/>
            <person name="Strong C."/>
            <person name="Du F."/>
            <person name="Carter J."/>
            <person name="Kremizki C."/>
            <person name="Layman D."/>
            <person name="Leonard S."/>
            <person name="Sun H."/>
            <person name="Fulton L."/>
            <person name="Nash W."/>
            <person name="Miner T."/>
            <person name="Minx P."/>
            <person name="Delehaunty K."/>
            <person name="Fronick C."/>
            <person name="Magrini V."/>
            <person name="Nhan M."/>
            <person name="Warren W."/>
            <person name="Florea L."/>
            <person name="Spieth J."/>
            <person name="Wilson R.K."/>
        </authorList>
    </citation>
    <scope>NUCLEOTIDE SEQUENCE [LARGE SCALE GENOMIC DNA]</scope>
    <source>
        <strain>ATCC 9150 / SARB42</strain>
    </source>
</reference>
<comment type="function">
    <text evidence="1">Catalyzes the last two sequential reactions in the de novo biosynthetic pathway for UDP-N-acetylglucosamine (UDP-GlcNAc). The C-terminal domain catalyzes the transfer of acetyl group from acetyl coenzyme A to glucosamine-1-phosphate (GlcN-1-P) to produce N-acetylglucosamine-1-phosphate (GlcNAc-1-P), which is converted into UDP-GlcNAc by the transfer of uridine 5-monophosphate (from uridine 5-triphosphate), a reaction catalyzed by the N-terminal domain.</text>
</comment>
<comment type="catalytic activity">
    <reaction evidence="1">
        <text>alpha-D-glucosamine 1-phosphate + acetyl-CoA = N-acetyl-alpha-D-glucosamine 1-phosphate + CoA + H(+)</text>
        <dbReference type="Rhea" id="RHEA:13725"/>
        <dbReference type="ChEBI" id="CHEBI:15378"/>
        <dbReference type="ChEBI" id="CHEBI:57287"/>
        <dbReference type="ChEBI" id="CHEBI:57288"/>
        <dbReference type="ChEBI" id="CHEBI:57776"/>
        <dbReference type="ChEBI" id="CHEBI:58516"/>
        <dbReference type="EC" id="2.3.1.157"/>
    </reaction>
</comment>
<comment type="catalytic activity">
    <reaction evidence="1">
        <text>N-acetyl-alpha-D-glucosamine 1-phosphate + UTP + H(+) = UDP-N-acetyl-alpha-D-glucosamine + diphosphate</text>
        <dbReference type="Rhea" id="RHEA:13509"/>
        <dbReference type="ChEBI" id="CHEBI:15378"/>
        <dbReference type="ChEBI" id="CHEBI:33019"/>
        <dbReference type="ChEBI" id="CHEBI:46398"/>
        <dbReference type="ChEBI" id="CHEBI:57705"/>
        <dbReference type="ChEBI" id="CHEBI:57776"/>
        <dbReference type="EC" id="2.7.7.23"/>
    </reaction>
</comment>
<comment type="cofactor">
    <cofactor evidence="1">
        <name>Mg(2+)</name>
        <dbReference type="ChEBI" id="CHEBI:18420"/>
    </cofactor>
    <text evidence="1">Binds 1 Mg(2+) ion per subunit.</text>
</comment>
<comment type="pathway">
    <text evidence="1">Nucleotide-sugar biosynthesis; UDP-N-acetyl-alpha-D-glucosamine biosynthesis; N-acetyl-alpha-D-glucosamine 1-phosphate from alpha-D-glucosamine 6-phosphate (route II): step 2/2.</text>
</comment>
<comment type="pathway">
    <text evidence="1">Nucleotide-sugar biosynthesis; UDP-N-acetyl-alpha-D-glucosamine biosynthesis; UDP-N-acetyl-alpha-D-glucosamine from N-acetyl-alpha-D-glucosamine 1-phosphate: step 1/1.</text>
</comment>
<comment type="pathway">
    <text evidence="1">Bacterial outer membrane biogenesis; LPS lipid A biosynthesis.</text>
</comment>
<comment type="subunit">
    <text evidence="1">Homotrimer.</text>
</comment>
<comment type="subcellular location">
    <subcellularLocation>
        <location evidence="1">Cytoplasm</location>
    </subcellularLocation>
</comment>
<comment type="similarity">
    <text evidence="1">In the N-terminal section; belongs to the N-acetylglucosamine-1-phosphate uridyltransferase family.</text>
</comment>
<comment type="similarity">
    <text evidence="1">In the C-terminal section; belongs to the transferase hexapeptide repeat family.</text>
</comment>
<organism>
    <name type="scientific">Salmonella paratyphi A (strain ATCC 9150 / SARB42)</name>
    <dbReference type="NCBI Taxonomy" id="295319"/>
    <lineage>
        <taxon>Bacteria</taxon>
        <taxon>Pseudomonadati</taxon>
        <taxon>Pseudomonadota</taxon>
        <taxon>Gammaproteobacteria</taxon>
        <taxon>Enterobacterales</taxon>
        <taxon>Enterobacteriaceae</taxon>
        <taxon>Salmonella</taxon>
    </lineage>
</organism>
<protein>
    <recommendedName>
        <fullName evidence="1">Bifunctional protein GlmU</fullName>
    </recommendedName>
    <domain>
        <recommendedName>
            <fullName evidence="1">UDP-N-acetylglucosamine pyrophosphorylase</fullName>
            <ecNumber evidence="1">2.7.7.23</ecNumber>
        </recommendedName>
        <alternativeName>
            <fullName evidence="1">N-acetylglucosamine-1-phosphate uridyltransferase</fullName>
        </alternativeName>
    </domain>
    <domain>
        <recommendedName>
            <fullName evidence="1">Glucosamine-1-phosphate N-acetyltransferase</fullName>
            <ecNumber evidence="1">2.3.1.157</ecNumber>
        </recommendedName>
    </domain>
</protein>
<evidence type="ECO:0000255" key="1">
    <source>
        <dbReference type="HAMAP-Rule" id="MF_01631"/>
    </source>
</evidence>
<gene>
    <name evidence="1" type="primary">glmU</name>
    <name type="ordered locus">SPA3701</name>
</gene>
<dbReference type="EC" id="2.7.7.23" evidence="1"/>
<dbReference type="EC" id="2.3.1.157" evidence="1"/>
<dbReference type="EMBL" id="CP000026">
    <property type="protein sequence ID" value="AAV79493.1"/>
    <property type="molecule type" value="Genomic_DNA"/>
</dbReference>
<dbReference type="RefSeq" id="WP_000934850.1">
    <property type="nucleotide sequence ID" value="NC_006511.1"/>
</dbReference>
<dbReference type="SMR" id="Q5PKV8"/>
<dbReference type="KEGG" id="spt:SPA3701"/>
<dbReference type="HOGENOM" id="CLU_029499_15_2_6"/>
<dbReference type="UniPathway" id="UPA00113">
    <property type="reaction ID" value="UER00532"/>
</dbReference>
<dbReference type="UniPathway" id="UPA00113">
    <property type="reaction ID" value="UER00533"/>
</dbReference>
<dbReference type="UniPathway" id="UPA00973"/>
<dbReference type="Proteomes" id="UP000008185">
    <property type="component" value="Chromosome"/>
</dbReference>
<dbReference type="GO" id="GO:0005737">
    <property type="term" value="C:cytoplasm"/>
    <property type="evidence" value="ECO:0007669"/>
    <property type="project" value="UniProtKB-SubCell"/>
</dbReference>
<dbReference type="GO" id="GO:0016020">
    <property type="term" value="C:membrane"/>
    <property type="evidence" value="ECO:0007669"/>
    <property type="project" value="GOC"/>
</dbReference>
<dbReference type="GO" id="GO:0019134">
    <property type="term" value="F:glucosamine-1-phosphate N-acetyltransferase activity"/>
    <property type="evidence" value="ECO:0007669"/>
    <property type="project" value="UniProtKB-UniRule"/>
</dbReference>
<dbReference type="GO" id="GO:0000287">
    <property type="term" value="F:magnesium ion binding"/>
    <property type="evidence" value="ECO:0007669"/>
    <property type="project" value="UniProtKB-UniRule"/>
</dbReference>
<dbReference type="GO" id="GO:0003977">
    <property type="term" value="F:UDP-N-acetylglucosamine diphosphorylase activity"/>
    <property type="evidence" value="ECO:0007669"/>
    <property type="project" value="UniProtKB-UniRule"/>
</dbReference>
<dbReference type="GO" id="GO:0000902">
    <property type="term" value="P:cell morphogenesis"/>
    <property type="evidence" value="ECO:0007669"/>
    <property type="project" value="UniProtKB-UniRule"/>
</dbReference>
<dbReference type="GO" id="GO:0071555">
    <property type="term" value="P:cell wall organization"/>
    <property type="evidence" value="ECO:0007669"/>
    <property type="project" value="UniProtKB-KW"/>
</dbReference>
<dbReference type="GO" id="GO:0009245">
    <property type="term" value="P:lipid A biosynthetic process"/>
    <property type="evidence" value="ECO:0007669"/>
    <property type="project" value="UniProtKB-UniRule"/>
</dbReference>
<dbReference type="GO" id="GO:0009252">
    <property type="term" value="P:peptidoglycan biosynthetic process"/>
    <property type="evidence" value="ECO:0007669"/>
    <property type="project" value="UniProtKB-UniRule"/>
</dbReference>
<dbReference type="GO" id="GO:0008360">
    <property type="term" value="P:regulation of cell shape"/>
    <property type="evidence" value="ECO:0007669"/>
    <property type="project" value="UniProtKB-KW"/>
</dbReference>
<dbReference type="GO" id="GO:0006048">
    <property type="term" value="P:UDP-N-acetylglucosamine biosynthetic process"/>
    <property type="evidence" value="ECO:0007669"/>
    <property type="project" value="UniProtKB-UniPathway"/>
</dbReference>
<dbReference type="CDD" id="cd02540">
    <property type="entry name" value="GT2_GlmU_N_bac"/>
    <property type="match status" value="1"/>
</dbReference>
<dbReference type="CDD" id="cd03353">
    <property type="entry name" value="LbH_GlmU_C"/>
    <property type="match status" value="1"/>
</dbReference>
<dbReference type="FunFam" id="2.160.10.10:FF:000011">
    <property type="entry name" value="Bifunctional protein GlmU"/>
    <property type="match status" value="1"/>
</dbReference>
<dbReference type="FunFam" id="3.90.550.10:FF:000006">
    <property type="entry name" value="Bifunctional protein GlmU"/>
    <property type="match status" value="1"/>
</dbReference>
<dbReference type="Gene3D" id="2.160.10.10">
    <property type="entry name" value="Hexapeptide repeat proteins"/>
    <property type="match status" value="1"/>
</dbReference>
<dbReference type="Gene3D" id="3.90.550.10">
    <property type="entry name" value="Spore Coat Polysaccharide Biosynthesis Protein SpsA, Chain A"/>
    <property type="match status" value="1"/>
</dbReference>
<dbReference type="HAMAP" id="MF_01631">
    <property type="entry name" value="GlmU"/>
    <property type="match status" value="1"/>
</dbReference>
<dbReference type="InterPro" id="IPR005882">
    <property type="entry name" value="Bifunctional_GlmU"/>
</dbReference>
<dbReference type="InterPro" id="IPR050065">
    <property type="entry name" value="GlmU-like"/>
</dbReference>
<dbReference type="InterPro" id="IPR038009">
    <property type="entry name" value="GlmU_C_LbH"/>
</dbReference>
<dbReference type="InterPro" id="IPR001451">
    <property type="entry name" value="Hexapep"/>
</dbReference>
<dbReference type="InterPro" id="IPR018357">
    <property type="entry name" value="Hexapep_transf_CS"/>
</dbReference>
<dbReference type="InterPro" id="IPR025877">
    <property type="entry name" value="MobA-like_NTP_Trfase"/>
</dbReference>
<dbReference type="InterPro" id="IPR029044">
    <property type="entry name" value="Nucleotide-diphossugar_trans"/>
</dbReference>
<dbReference type="InterPro" id="IPR011004">
    <property type="entry name" value="Trimer_LpxA-like_sf"/>
</dbReference>
<dbReference type="NCBIfam" id="TIGR01173">
    <property type="entry name" value="glmU"/>
    <property type="match status" value="1"/>
</dbReference>
<dbReference type="NCBIfam" id="NF006986">
    <property type="entry name" value="PRK09451.1"/>
    <property type="match status" value="1"/>
</dbReference>
<dbReference type="PANTHER" id="PTHR43584:SF3">
    <property type="entry name" value="BIFUNCTIONAL PROTEIN GLMU"/>
    <property type="match status" value="1"/>
</dbReference>
<dbReference type="PANTHER" id="PTHR43584">
    <property type="entry name" value="NUCLEOTIDYL TRANSFERASE"/>
    <property type="match status" value="1"/>
</dbReference>
<dbReference type="Pfam" id="PF00132">
    <property type="entry name" value="Hexapep"/>
    <property type="match status" value="1"/>
</dbReference>
<dbReference type="Pfam" id="PF12804">
    <property type="entry name" value="NTP_transf_3"/>
    <property type="match status" value="1"/>
</dbReference>
<dbReference type="SUPFAM" id="SSF53448">
    <property type="entry name" value="Nucleotide-diphospho-sugar transferases"/>
    <property type="match status" value="1"/>
</dbReference>
<dbReference type="SUPFAM" id="SSF51161">
    <property type="entry name" value="Trimeric LpxA-like enzymes"/>
    <property type="match status" value="1"/>
</dbReference>
<dbReference type="PROSITE" id="PS00101">
    <property type="entry name" value="HEXAPEP_TRANSFERASES"/>
    <property type="match status" value="1"/>
</dbReference>